<name>FABZ_SHEPC</name>
<evidence type="ECO:0000255" key="1">
    <source>
        <dbReference type="HAMAP-Rule" id="MF_00406"/>
    </source>
</evidence>
<organism>
    <name type="scientific">Shewanella putrefaciens (strain CN-32 / ATCC BAA-453)</name>
    <dbReference type="NCBI Taxonomy" id="319224"/>
    <lineage>
        <taxon>Bacteria</taxon>
        <taxon>Pseudomonadati</taxon>
        <taxon>Pseudomonadota</taxon>
        <taxon>Gammaproteobacteria</taxon>
        <taxon>Alteromonadales</taxon>
        <taxon>Shewanellaceae</taxon>
        <taxon>Shewanella</taxon>
    </lineage>
</organism>
<comment type="function">
    <text evidence="1">Involved in unsaturated fatty acids biosynthesis. Catalyzes the dehydration of short chain beta-hydroxyacyl-ACPs and long chain saturated and unsaturated beta-hydroxyacyl-ACPs.</text>
</comment>
<comment type="catalytic activity">
    <reaction evidence="1">
        <text>a (3R)-hydroxyacyl-[ACP] = a (2E)-enoyl-[ACP] + H2O</text>
        <dbReference type="Rhea" id="RHEA:13097"/>
        <dbReference type="Rhea" id="RHEA-COMP:9925"/>
        <dbReference type="Rhea" id="RHEA-COMP:9945"/>
        <dbReference type="ChEBI" id="CHEBI:15377"/>
        <dbReference type="ChEBI" id="CHEBI:78784"/>
        <dbReference type="ChEBI" id="CHEBI:78827"/>
        <dbReference type="EC" id="4.2.1.59"/>
    </reaction>
</comment>
<comment type="subcellular location">
    <subcellularLocation>
        <location evidence="1">Cytoplasm</location>
    </subcellularLocation>
</comment>
<comment type="similarity">
    <text evidence="1">Belongs to the thioester dehydratase family. FabZ subfamily.</text>
</comment>
<dbReference type="EC" id="4.2.1.59" evidence="1"/>
<dbReference type="EMBL" id="CP000681">
    <property type="protein sequence ID" value="ABP75087.1"/>
    <property type="molecule type" value="Genomic_DNA"/>
</dbReference>
<dbReference type="SMR" id="A4Y554"/>
<dbReference type="STRING" id="319224.Sputcn32_1359"/>
<dbReference type="KEGG" id="spc:Sputcn32_1359"/>
<dbReference type="eggNOG" id="COG0764">
    <property type="taxonomic scope" value="Bacteria"/>
</dbReference>
<dbReference type="HOGENOM" id="CLU_078912_1_0_6"/>
<dbReference type="GO" id="GO:0005737">
    <property type="term" value="C:cytoplasm"/>
    <property type="evidence" value="ECO:0007669"/>
    <property type="project" value="UniProtKB-SubCell"/>
</dbReference>
<dbReference type="GO" id="GO:0016020">
    <property type="term" value="C:membrane"/>
    <property type="evidence" value="ECO:0007669"/>
    <property type="project" value="GOC"/>
</dbReference>
<dbReference type="GO" id="GO:0019171">
    <property type="term" value="F:(3R)-hydroxyacyl-[acyl-carrier-protein] dehydratase activity"/>
    <property type="evidence" value="ECO:0007669"/>
    <property type="project" value="UniProtKB-EC"/>
</dbReference>
<dbReference type="GO" id="GO:0006633">
    <property type="term" value="P:fatty acid biosynthetic process"/>
    <property type="evidence" value="ECO:0007669"/>
    <property type="project" value="UniProtKB-UniRule"/>
</dbReference>
<dbReference type="GO" id="GO:0009245">
    <property type="term" value="P:lipid A biosynthetic process"/>
    <property type="evidence" value="ECO:0007669"/>
    <property type="project" value="UniProtKB-UniRule"/>
</dbReference>
<dbReference type="CDD" id="cd01288">
    <property type="entry name" value="FabZ"/>
    <property type="match status" value="1"/>
</dbReference>
<dbReference type="FunFam" id="3.10.129.10:FF:000001">
    <property type="entry name" value="3-hydroxyacyl-[acyl-carrier-protein] dehydratase FabZ"/>
    <property type="match status" value="1"/>
</dbReference>
<dbReference type="Gene3D" id="3.10.129.10">
    <property type="entry name" value="Hotdog Thioesterase"/>
    <property type="match status" value="1"/>
</dbReference>
<dbReference type="HAMAP" id="MF_00406">
    <property type="entry name" value="FabZ"/>
    <property type="match status" value="1"/>
</dbReference>
<dbReference type="InterPro" id="IPR013114">
    <property type="entry name" value="FabA_FabZ"/>
</dbReference>
<dbReference type="InterPro" id="IPR010084">
    <property type="entry name" value="FabZ"/>
</dbReference>
<dbReference type="InterPro" id="IPR029069">
    <property type="entry name" value="HotDog_dom_sf"/>
</dbReference>
<dbReference type="NCBIfam" id="TIGR01750">
    <property type="entry name" value="fabZ"/>
    <property type="match status" value="1"/>
</dbReference>
<dbReference type="NCBIfam" id="NF000582">
    <property type="entry name" value="PRK00006.1"/>
    <property type="match status" value="1"/>
</dbReference>
<dbReference type="PANTHER" id="PTHR30272">
    <property type="entry name" value="3-HYDROXYACYL-[ACYL-CARRIER-PROTEIN] DEHYDRATASE"/>
    <property type="match status" value="1"/>
</dbReference>
<dbReference type="PANTHER" id="PTHR30272:SF1">
    <property type="entry name" value="3-HYDROXYACYL-[ACYL-CARRIER-PROTEIN] DEHYDRATASE"/>
    <property type="match status" value="1"/>
</dbReference>
<dbReference type="Pfam" id="PF07977">
    <property type="entry name" value="FabA"/>
    <property type="match status" value="1"/>
</dbReference>
<dbReference type="SUPFAM" id="SSF54637">
    <property type="entry name" value="Thioesterase/thiol ester dehydrase-isomerase"/>
    <property type="match status" value="1"/>
</dbReference>
<reference key="1">
    <citation type="submission" date="2007-04" db="EMBL/GenBank/DDBJ databases">
        <title>Complete sequence of Shewanella putrefaciens CN-32.</title>
        <authorList>
            <consortium name="US DOE Joint Genome Institute"/>
            <person name="Copeland A."/>
            <person name="Lucas S."/>
            <person name="Lapidus A."/>
            <person name="Barry K."/>
            <person name="Detter J.C."/>
            <person name="Glavina del Rio T."/>
            <person name="Hammon N."/>
            <person name="Israni S."/>
            <person name="Dalin E."/>
            <person name="Tice H."/>
            <person name="Pitluck S."/>
            <person name="Chain P."/>
            <person name="Malfatti S."/>
            <person name="Shin M."/>
            <person name="Vergez L."/>
            <person name="Schmutz J."/>
            <person name="Larimer F."/>
            <person name="Land M."/>
            <person name="Hauser L."/>
            <person name="Kyrpides N."/>
            <person name="Mikhailova N."/>
            <person name="Romine M.F."/>
            <person name="Fredrickson J."/>
            <person name="Tiedje J."/>
            <person name="Richardson P."/>
        </authorList>
    </citation>
    <scope>NUCLEOTIDE SEQUENCE [LARGE SCALE GENOMIC DNA]</scope>
    <source>
        <strain>CN-32 / ATCC BAA-453</strain>
    </source>
</reference>
<accession>A4Y554</accession>
<sequence length="154" mass="17416">MSNQMNTMDITEILKYLPHRYPFLLIDRVLDYTPGESLHAIKNVSINEPFFQGHFPIQPVMPGVLILEAMAQATGLLAFKTMSNDVPPPGVLYYFAGIDNARFRRVVVPGDQIHFEVKMIKERRGIGVFYGEARVDGEVACSAEIMCARREINQ</sequence>
<feature type="chain" id="PRO_1000049861" description="3-hydroxyacyl-[acyl-carrier-protein] dehydratase FabZ">
    <location>
        <begin position="1"/>
        <end position="154"/>
    </location>
</feature>
<feature type="active site" evidence="1">
    <location>
        <position position="54"/>
    </location>
</feature>
<proteinExistence type="inferred from homology"/>
<keyword id="KW-0963">Cytoplasm</keyword>
<keyword id="KW-0441">Lipid A biosynthesis</keyword>
<keyword id="KW-0444">Lipid biosynthesis</keyword>
<keyword id="KW-0443">Lipid metabolism</keyword>
<keyword id="KW-0456">Lyase</keyword>
<gene>
    <name evidence="1" type="primary">fabZ</name>
    <name type="ordered locus">Sputcn32_1359</name>
</gene>
<protein>
    <recommendedName>
        <fullName evidence="1">3-hydroxyacyl-[acyl-carrier-protein] dehydratase FabZ</fullName>
        <ecNumber evidence="1">4.2.1.59</ecNumber>
    </recommendedName>
    <alternativeName>
        <fullName evidence="1">(3R)-hydroxymyristoyl-[acyl-carrier-protein] dehydratase</fullName>
        <shortName evidence="1">(3R)-hydroxymyristoyl-ACP dehydrase</shortName>
    </alternativeName>
    <alternativeName>
        <fullName evidence="1">Beta-hydroxyacyl-ACP dehydratase</fullName>
    </alternativeName>
</protein>